<comment type="function">
    <text evidence="1">Cleaved by the protease thrombin to yield monomers which, together with fibrinogen alpha (FGA) and fibrinogen gamma (FGG), polymerize to form an insoluble fibrin matrix. Fibrin has a major function in hemostasis as one of the primary components of blood clots. In addition, functions during the early stages of wound repair to stabilize the lesion and guide cell migration during re-epithelialization. Was originally thought to be essential for platelet aggregation, based on in vitro studies using anticoagulated blood. However subsequent studies have shown that it is not absolutely required for thrombus formation in vivo. Enhances expression of SELP in activated platelets. Maternal fibrinogen is essential for successful pregnancy. Fibrin deposition is also associated with infection, where it protects against IFNG-mediated hemorrhage. May also facilitate the antibacterial immune response via both innate and T-cell mediated pathways.</text>
</comment>
<comment type="subunit">
    <text evidence="2">Heterohexamer; disulfide linked. Contains 2 sets of 3 non-identical chains (alpha, beta and gamma). The 2 heterotrimers are in head to head conformation with the N-termini in a small central domain (By similarity).</text>
</comment>
<comment type="subcellular location">
    <subcellularLocation>
        <location>Secreted</location>
    </subcellularLocation>
</comment>
<comment type="domain">
    <text evidence="2">A long coiled coil structure formed by 3 polypeptide chains connects the central nodule to the C-terminal domains (distal nodules). The long C-terminal ends of the alpha chains fold back, contributing a fourth strand to the coiled coil structure.</text>
</comment>
<comment type="PTM">
    <text>Conversion of fibrinogen to fibrin is triggered by thrombin, which cleaves fibrinopeptides A and B from alpha and beta chains, and thus exposes the N-terminal polymerization sites responsible for the formation of the soft clot.</text>
</comment>
<keyword id="KW-1064">Adaptive immunity</keyword>
<keyword id="KW-0094">Blood coagulation</keyword>
<keyword id="KW-0175">Coiled coil</keyword>
<keyword id="KW-0903">Direct protein sequencing</keyword>
<keyword id="KW-1015">Disulfide bond</keyword>
<keyword id="KW-0356">Hemostasis</keyword>
<keyword id="KW-0391">Immunity</keyword>
<keyword id="KW-0399">Innate immunity</keyword>
<keyword id="KW-1185">Reference proteome</keyword>
<keyword id="KW-0964">Secreted</keyword>
<keyword id="KW-0765">Sulfation</keyword>
<proteinExistence type="evidence at protein level"/>
<name>FIBB_EQUAS</name>
<organism>
    <name type="scientific">Equus asinus</name>
    <name type="common">Donkey</name>
    <name type="synonym">Equus africanus asinus</name>
    <dbReference type="NCBI Taxonomy" id="9793"/>
    <lineage>
        <taxon>Eukaryota</taxon>
        <taxon>Metazoa</taxon>
        <taxon>Chordata</taxon>
        <taxon>Craniata</taxon>
        <taxon>Vertebrata</taxon>
        <taxon>Euteleostomi</taxon>
        <taxon>Mammalia</taxon>
        <taxon>Eutheria</taxon>
        <taxon>Laurasiatheria</taxon>
        <taxon>Perissodactyla</taxon>
        <taxon>Equidae</taxon>
        <taxon>Equus</taxon>
    </lineage>
</organism>
<feature type="peptide" id="PRO_0000009066" description="Fibrinopeptide B">
    <location>
        <begin position="1"/>
        <end position="19"/>
    </location>
</feature>
<feature type="modified residue" description="Sulfotyrosine" evidence="3">
    <location>
        <position position="3"/>
    </location>
</feature>
<feature type="non-terminal residue">
    <location>
        <position position="19"/>
    </location>
</feature>
<reference key="1">
    <citation type="journal article" date="1966" name="Ark. Kemi">
        <title>Structure of fibrinopeptides-its relation to enzyme specificity and phylogeny and classification of species.</title>
        <authorList>
            <person name="Blombaeck B."/>
            <person name="Blombaeck M."/>
            <person name="Grondahl N.J."/>
            <person name="Holmberg E."/>
        </authorList>
    </citation>
    <scope>PROTEIN SEQUENCE</scope>
    <scope>SULFATION AT TYR-3</scope>
</reference>
<sequence length="19" mass="2296">LDYDHEEEDGRTKVTFDAR</sequence>
<evidence type="ECO:0000250" key="1">
    <source>
        <dbReference type="UniProtKB" id="E9PV24"/>
    </source>
</evidence>
<evidence type="ECO:0000250" key="2">
    <source>
        <dbReference type="UniProtKB" id="P02675"/>
    </source>
</evidence>
<evidence type="ECO:0000269" key="3">
    <source ref="1"/>
</evidence>
<accession>P68120</accession>
<accession>P14471</accession>
<dbReference type="Proteomes" id="UP000694387">
    <property type="component" value="Unplaced"/>
</dbReference>
<dbReference type="GO" id="GO:0005576">
    <property type="term" value="C:extracellular region"/>
    <property type="evidence" value="ECO:0007669"/>
    <property type="project" value="UniProtKB-SubCell"/>
</dbReference>
<dbReference type="GO" id="GO:0002250">
    <property type="term" value="P:adaptive immune response"/>
    <property type="evidence" value="ECO:0007669"/>
    <property type="project" value="UniProtKB-KW"/>
</dbReference>
<dbReference type="GO" id="GO:0007596">
    <property type="term" value="P:blood coagulation"/>
    <property type="evidence" value="ECO:0007669"/>
    <property type="project" value="UniProtKB-KW"/>
</dbReference>
<dbReference type="GO" id="GO:0045087">
    <property type="term" value="P:innate immune response"/>
    <property type="evidence" value="ECO:0007669"/>
    <property type="project" value="UniProtKB-KW"/>
</dbReference>
<protein>
    <recommendedName>
        <fullName>Fibrinogen beta chain</fullName>
    </recommendedName>
    <component>
        <recommendedName>
            <fullName>Fibrinopeptide B</fullName>
        </recommendedName>
    </component>
</protein>
<gene>
    <name type="primary">FGB</name>
</gene>